<proteinExistence type="inferred from homology"/>
<name>NUOH_FRAT1</name>
<keyword id="KW-0997">Cell inner membrane</keyword>
<keyword id="KW-1003">Cell membrane</keyword>
<keyword id="KW-0472">Membrane</keyword>
<keyword id="KW-0520">NAD</keyword>
<keyword id="KW-0874">Quinone</keyword>
<keyword id="KW-1278">Translocase</keyword>
<keyword id="KW-0812">Transmembrane</keyword>
<keyword id="KW-1133">Transmembrane helix</keyword>
<keyword id="KW-0830">Ubiquinone</keyword>
<reference key="1">
    <citation type="journal article" date="2007" name="PLoS ONE">
        <title>Genome sequencing shows that European isolates of Francisella tularensis subspecies tularensis are almost identical to US laboratory strain Schu S4.</title>
        <authorList>
            <person name="Chaudhuri R.R."/>
            <person name="Ren C.-P."/>
            <person name="Desmond L."/>
            <person name="Vincent G.A."/>
            <person name="Silman N.J."/>
            <person name="Brehm J.K."/>
            <person name="Elmore M.J."/>
            <person name="Hudson M.J."/>
            <person name="Forsman M."/>
            <person name="Isherwood K.E."/>
            <person name="Gurycova D."/>
            <person name="Minton N.P."/>
            <person name="Titball R.W."/>
            <person name="Pallen M.J."/>
            <person name="Vipond R."/>
        </authorList>
    </citation>
    <scope>NUCLEOTIDE SEQUENCE [LARGE SCALE GENOMIC DNA]</scope>
    <source>
        <strain>FSC 198</strain>
    </source>
</reference>
<evidence type="ECO:0000255" key="1">
    <source>
        <dbReference type="HAMAP-Rule" id="MF_01350"/>
    </source>
</evidence>
<protein>
    <recommendedName>
        <fullName evidence="1">NADH-quinone oxidoreductase subunit H</fullName>
        <ecNumber evidence="1">7.1.1.-</ecNumber>
    </recommendedName>
    <alternativeName>
        <fullName evidence="1">NADH dehydrogenase I subunit H</fullName>
    </alternativeName>
    <alternativeName>
        <fullName evidence="1">NDH-1 subunit H</fullName>
    </alternativeName>
</protein>
<feature type="chain" id="PRO_0000298814" description="NADH-quinone oxidoreductase subunit H">
    <location>
        <begin position="1"/>
        <end position="336"/>
    </location>
</feature>
<feature type="transmembrane region" description="Helical" evidence="1">
    <location>
        <begin position="4"/>
        <end position="24"/>
    </location>
</feature>
<feature type="transmembrane region" description="Helical" evidence="1">
    <location>
        <begin position="75"/>
        <end position="95"/>
    </location>
</feature>
<feature type="transmembrane region" description="Helical" evidence="1">
    <location>
        <begin position="108"/>
        <end position="128"/>
    </location>
</feature>
<feature type="transmembrane region" description="Helical" evidence="1">
    <location>
        <begin position="154"/>
        <end position="174"/>
    </location>
</feature>
<feature type="transmembrane region" description="Helical" evidence="1">
    <location>
        <begin position="181"/>
        <end position="201"/>
    </location>
</feature>
<feature type="transmembrane region" description="Helical" evidence="1">
    <location>
        <begin position="233"/>
        <end position="253"/>
    </location>
</feature>
<feature type="transmembrane region" description="Helical" evidence="1">
    <location>
        <begin position="272"/>
        <end position="292"/>
    </location>
</feature>
<feature type="transmembrane region" description="Helical" evidence="1">
    <location>
        <begin position="308"/>
        <end position="328"/>
    </location>
</feature>
<comment type="function">
    <text evidence="1">NDH-1 shuttles electrons from NADH, via FMN and iron-sulfur (Fe-S) centers, to quinones in the respiratory chain. The immediate electron acceptor for the enzyme in this species is believed to be ubiquinone. Couples the redox reaction to proton translocation (for every two electrons transferred, four hydrogen ions are translocated across the cytoplasmic membrane), and thus conserves the redox energy in a proton gradient. This subunit may bind ubiquinone.</text>
</comment>
<comment type="catalytic activity">
    <reaction evidence="1">
        <text>a quinone + NADH + 5 H(+)(in) = a quinol + NAD(+) + 4 H(+)(out)</text>
        <dbReference type="Rhea" id="RHEA:57888"/>
        <dbReference type="ChEBI" id="CHEBI:15378"/>
        <dbReference type="ChEBI" id="CHEBI:24646"/>
        <dbReference type="ChEBI" id="CHEBI:57540"/>
        <dbReference type="ChEBI" id="CHEBI:57945"/>
        <dbReference type="ChEBI" id="CHEBI:132124"/>
    </reaction>
</comment>
<comment type="subunit">
    <text evidence="1">NDH-1 is composed of 14 different subunits. Subunits NuoA, H, J, K, L, M, N constitute the membrane sector of the complex.</text>
</comment>
<comment type="subcellular location">
    <subcellularLocation>
        <location evidence="1">Cell inner membrane</location>
        <topology evidence="1">Multi-pass membrane protein</topology>
    </subcellularLocation>
</comment>
<comment type="similarity">
    <text evidence="1">Belongs to the complex I subunit 1 family.</text>
</comment>
<organism>
    <name type="scientific">Francisella tularensis subsp. tularensis (strain FSC 198)</name>
    <dbReference type="NCBI Taxonomy" id="393115"/>
    <lineage>
        <taxon>Bacteria</taxon>
        <taxon>Pseudomonadati</taxon>
        <taxon>Pseudomonadota</taxon>
        <taxon>Gammaproteobacteria</taxon>
        <taxon>Thiotrichales</taxon>
        <taxon>Francisellaceae</taxon>
        <taxon>Francisella</taxon>
    </lineage>
</organism>
<dbReference type="EC" id="7.1.1.-" evidence="1"/>
<dbReference type="EMBL" id="AM286280">
    <property type="protein sequence ID" value="CAL08054.1"/>
    <property type="molecule type" value="Genomic_DNA"/>
</dbReference>
<dbReference type="RefSeq" id="WP_003017378.1">
    <property type="nucleotide sequence ID" value="NC_008245.1"/>
</dbReference>
<dbReference type="SMR" id="Q14K31"/>
<dbReference type="KEGG" id="ftf:FTF0038"/>
<dbReference type="HOGENOM" id="CLU_015134_0_1_6"/>
<dbReference type="GO" id="GO:0005886">
    <property type="term" value="C:plasma membrane"/>
    <property type="evidence" value="ECO:0007669"/>
    <property type="project" value="UniProtKB-SubCell"/>
</dbReference>
<dbReference type="GO" id="GO:0003954">
    <property type="term" value="F:NADH dehydrogenase activity"/>
    <property type="evidence" value="ECO:0007669"/>
    <property type="project" value="TreeGrafter"/>
</dbReference>
<dbReference type="GO" id="GO:0016655">
    <property type="term" value="F:oxidoreductase activity, acting on NAD(P)H, quinone or similar compound as acceptor"/>
    <property type="evidence" value="ECO:0007669"/>
    <property type="project" value="UniProtKB-UniRule"/>
</dbReference>
<dbReference type="GO" id="GO:0048038">
    <property type="term" value="F:quinone binding"/>
    <property type="evidence" value="ECO:0007669"/>
    <property type="project" value="UniProtKB-KW"/>
</dbReference>
<dbReference type="GO" id="GO:0009060">
    <property type="term" value="P:aerobic respiration"/>
    <property type="evidence" value="ECO:0007669"/>
    <property type="project" value="TreeGrafter"/>
</dbReference>
<dbReference type="HAMAP" id="MF_01350">
    <property type="entry name" value="NDH1_NuoH"/>
    <property type="match status" value="1"/>
</dbReference>
<dbReference type="InterPro" id="IPR001694">
    <property type="entry name" value="NADH_UbQ_OxRdtase_su1/FPO"/>
</dbReference>
<dbReference type="InterPro" id="IPR018086">
    <property type="entry name" value="NADH_UbQ_OxRdtase_su1_CS"/>
</dbReference>
<dbReference type="NCBIfam" id="NF004741">
    <property type="entry name" value="PRK06076.1-2"/>
    <property type="match status" value="1"/>
</dbReference>
<dbReference type="PANTHER" id="PTHR11432">
    <property type="entry name" value="NADH DEHYDROGENASE SUBUNIT 1"/>
    <property type="match status" value="1"/>
</dbReference>
<dbReference type="PANTHER" id="PTHR11432:SF3">
    <property type="entry name" value="NADH-UBIQUINONE OXIDOREDUCTASE CHAIN 1"/>
    <property type="match status" value="1"/>
</dbReference>
<dbReference type="Pfam" id="PF00146">
    <property type="entry name" value="NADHdh"/>
    <property type="match status" value="1"/>
</dbReference>
<dbReference type="PROSITE" id="PS00667">
    <property type="entry name" value="COMPLEX1_ND1_1"/>
    <property type="match status" value="1"/>
</dbReference>
<dbReference type="PROSITE" id="PS00668">
    <property type="entry name" value="COMPLEX1_ND1_2"/>
    <property type="match status" value="1"/>
</dbReference>
<gene>
    <name evidence="1" type="primary">nuoH</name>
    <name type="ordered locus">FTF0038</name>
</gene>
<sequence>MLGYILWTSLYVLLIVIPLILVVAYYTYAERKVIGYMQDRIGPNRVGSFGLLQPIFDALKLFLKEIIVPTNSNRYLFFIAPILAFAPAYAAWAVIPFSKGVVLSDMNLGLLYILAMTSFSIYGIVIAGWASNSKYSLFGALRAGAQVISYELAMGFAIVGVVIAAGSMGITGIIEAQSGGIWHWYFIPLFPLFIVYFIAGIAETNRAPFDVVEGESEIVAGHHIEYTGSRFALFFLAEYANMILISILTSIMFLGGWNSPFQATALESIFGFVPGVVWLFAKTGIFMFMFLWVRATYPRYRYDQIMRLGWKIFIPLTFVWVVIVACMVRLGVGPWW</sequence>
<accession>Q14K31</accession>